<protein>
    <recommendedName>
        <fullName evidence="2">Serine/threonine-protein kinase PLK4</fullName>
        <ecNumber evidence="2">2.7.11.21</ecNumber>
    </recommendedName>
    <alternativeName>
        <fullName>Polo-like kinase 4</fullName>
        <shortName>PLK-4</shortName>
    </alternativeName>
    <alternativeName>
        <fullName>Serine/threonine-protein kinase Sak</fullName>
    </alternativeName>
</protein>
<gene>
    <name evidence="2" type="primary">plk4</name>
    <name type="synonym">sak</name>
</gene>
<proteinExistence type="evidence at transcript level"/>
<reference key="1">
    <citation type="submission" date="2003-01" db="EMBL/GenBank/DDBJ databases">
        <authorList>
            <consortium name="NIH - Zebrafish Gene Collection (ZGC) project"/>
        </authorList>
    </citation>
    <scope>NUCLEOTIDE SEQUENCE [LARGE SCALE MRNA]</scope>
    <source>
        <strain>AB</strain>
    </source>
</reference>
<reference key="2">
    <citation type="journal article" date="2014" name="Nat. Genet.">
        <title>Mutations in PLK4, encoding a master regulator of centriole biogenesis, cause microcephaly, growth failure and retinopathy.</title>
        <authorList>
            <person name="Martin C.A."/>
            <person name="Ahmad I."/>
            <person name="Klingseisen A."/>
            <person name="Hussain M.S."/>
            <person name="Bicknell L.S."/>
            <person name="Leitch A."/>
            <person name="Nuernberg G."/>
            <person name="Toliat M.R."/>
            <person name="Murray J.E."/>
            <person name="Hunt D."/>
            <person name="Khan F."/>
            <person name="Ali Z."/>
            <person name="Tinschert S."/>
            <person name="Ding J."/>
            <person name="Keith C."/>
            <person name="Harley M.E."/>
            <person name="Heyn P."/>
            <person name="Mueller R."/>
            <person name="Hoffmann I."/>
            <person name="Daire V.C."/>
            <person name="Dollfus H."/>
            <person name="Dupuis L."/>
            <person name="Bashamboo A."/>
            <person name="McElreavey K."/>
            <person name="Kariminejad A."/>
            <person name="Mendoza-Londono R."/>
            <person name="Moore A.T."/>
            <person name="Saggar A."/>
            <person name="Schlechter C."/>
            <person name="Weleber R."/>
            <person name="Thiele H."/>
            <person name="Altmueller J."/>
            <person name="Hoehne W."/>
            <person name="Hurles M.E."/>
            <person name="Noegel A.A."/>
            <person name="Baig S.M."/>
            <person name="Nuernberg P."/>
            <person name="Jackson A.P."/>
        </authorList>
    </citation>
    <scope>DISRUPTION PHENOTYPE</scope>
</reference>
<organism>
    <name type="scientific">Danio rerio</name>
    <name type="common">Zebrafish</name>
    <name type="synonym">Brachydanio rerio</name>
    <dbReference type="NCBI Taxonomy" id="7955"/>
    <lineage>
        <taxon>Eukaryota</taxon>
        <taxon>Metazoa</taxon>
        <taxon>Chordata</taxon>
        <taxon>Craniata</taxon>
        <taxon>Vertebrata</taxon>
        <taxon>Euteleostomi</taxon>
        <taxon>Actinopterygii</taxon>
        <taxon>Neopterygii</taxon>
        <taxon>Teleostei</taxon>
        <taxon>Ostariophysi</taxon>
        <taxon>Cypriniformes</taxon>
        <taxon>Danionidae</taxon>
        <taxon>Danioninae</taxon>
        <taxon>Danio</taxon>
    </lineage>
</organism>
<accession>Q7ZVS3</accession>
<sequence>MSVSIGDKIEDFKVLTLLGKGSFACVYRAKSVNTGLEVAIKMIDKKAMHKAGMVQRVINEVEIQCRLKHPSVLELYNYFEDSNYVYLVLEMCHNGEMSRYLKERKNPFTEEEARHFMHQIVKGMLYLHTHGIMHRDLTLTNLLLTTSMNIKIADFGLATQLKLPSEKHFTMCGTPNYISPEVATRSAHGLESDVWSLGCMFYAFLTGRPPFDTDTVKRTLNKVVLGEYQMPMHISAEAQDLIQQLLQKNPALRPSLSAVLDHPFMTQSGPTASKDSGSSNGGSIDSGIATISTASNATNNSSSSRLQRRTRQMIGQPLPSRMAPIPSHSHHSTSSSFKSGQDWQPNSQDDLSRMGVGRIPVGADSGRPHSRYLRRAHSSDRSAVGYSHNPQEAELERCHSEEMLSGAGRLFPQTSGYRNAPHGYSKHDRLPSPPVKQPANPASSFSTSTHSTRQQMPDSQTQPWFSNDGVFKRPADMSGHSSSGSFHSERGPIGTQTSCSDKPSGLHSQQQPILFQHNNPGPCREDAFVSGHMSEPQAYSDAQFPCPPLSKGKANTEKKDKVCLKKSFPPLCAARLKPIRQKTKNAVVSILGNGEVCMELLKGQGAQERVKEVLRISCDGSMVTVYQPNEGKGFPVLDHPPSPPEDILICSFDDLPEKYWKKYQYATKFVQLVKSKTPKVTLYTKFAKCMLMENSPNPDLEVCFYDGAKTHKTSEQVRVVEKSGKSYTVKGDVGLSGLNPECRLYIELSEEGHRMCLSLEAAITAEEQRSAKNTPFFPITIGRRPVNPVPPAPAPSSSSSCRPAAAAEVAHVCLSPPQHPQITPSMISYAGSDLTTASVAKGSSPVHKDERTVNSGKVLKSIFVPNIGWVSQLTTGEVWVQFNDGSQLMVQVGVSCIIFTSPEGHITRYKENEKLPELVKEKLHCLSSILGLLANPAARC</sequence>
<keyword id="KW-0067">ATP-binding</keyword>
<keyword id="KW-0963">Cytoplasm</keyword>
<keyword id="KW-0206">Cytoskeleton</keyword>
<keyword id="KW-0418">Kinase</keyword>
<keyword id="KW-0547">Nucleotide-binding</keyword>
<keyword id="KW-1185">Reference proteome</keyword>
<keyword id="KW-0723">Serine/threonine-protein kinase</keyword>
<keyword id="KW-0808">Transferase</keyword>
<keyword id="KW-0832">Ubl conjugation</keyword>
<name>PLK4_DANRE</name>
<evidence type="ECO:0000250" key="1"/>
<evidence type="ECO:0000250" key="2">
    <source>
        <dbReference type="UniProtKB" id="O00444"/>
    </source>
</evidence>
<evidence type="ECO:0000250" key="3">
    <source>
        <dbReference type="UniProtKB" id="Q64702"/>
    </source>
</evidence>
<evidence type="ECO:0000255" key="4">
    <source>
        <dbReference type="PROSITE-ProRule" id="PRU00154"/>
    </source>
</evidence>
<evidence type="ECO:0000255" key="5">
    <source>
        <dbReference type="PROSITE-ProRule" id="PRU00159"/>
    </source>
</evidence>
<evidence type="ECO:0000255" key="6">
    <source>
        <dbReference type="PROSITE-ProRule" id="PRU01328"/>
    </source>
</evidence>
<evidence type="ECO:0000255" key="7">
    <source>
        <dbReference type="PROSITE-ProRule" id="PRU01329"/>
    </source>
</evidence>
<evidence type="ECO:0000256" key="8">
    <source>
        <dbReference type="SAM" id="MobiDB-lite"/>
    </source>
</evidence>
<evidence type="ECO:0000269" key="9">
    <source>
    </source>
</evidence>
<evidence type="ECO:0000305" key="10"/>
<feature type="chain" id="PRO_0000385282" description="Serine/threonine-protein kinase PLK4">
    <location>
        <begin position="1"/>
        <end position="940"/>
    </location>
</feature>
<feature type="domain" description="Protein kinase" evidence="5">
    <location>
        <begin position="12"/>
        <end position="265"/>
    </location>
</feature>
<feature type="domain" description="Cryptic POLO box 1 (CPB1)" evidence="6">
    <location>
        <begin position="563"/>
        <end position="676"/>
    </location>
</feature>
<feature type="domain" description="Cryptic POLO box 2 (CPB2)" evidence="7">
    <location>
        <begin position="677"/>
        <end position="791"/>
    </location>
</feature>
<feature type="domain" description="POLO box" evidence="4">
    <location>
        <begin position="857"/>
        <end position="935"/>
    </location>
</feature>
<feature type="region of interest" description="Disordered" evidence="8">
    <location>
        <begin position="262"/>
        <end position="353"/>
    </location>
</feature>
<feature type="region of interest" description="Disordered" evidence="8">
    <location>
        <begin position="409"/>
        <end position="529"/>
    </location>
</feature>
<feature type="compositionally biased region" description="Low complexity" evidence="8">
    <location>
        <begin position="273"/>
        <end position="305"/>
    </location>
</feature>
<feature type="compositionally biased region" description="Polar residues" evidence="8">
    <location>
        <begin position="337"/>
        <end position="349"/>
    </location>
</feature>
<feature type="compositionally biased region" description="Polar residues" evidence="8">
    <location>
        <begin position="440"/>
        <end position="465"/>
    </location>
</feature>
<feature type="compositionally biased region" description="Polar residues" evidence="8">
    <location>
        <begin position="494"/>
        <end position="519"/>
    </location>
</feature>
<feature type="active site" description="Proton acceptor" evidence="5">
    <location>
        <position position="136"/>
    </location>
</feature>
<feature type="binding site" evidence="5">
    <location>
        <begin position="18"/>
        <end position="26"/>
    </location>
    <ligand>
        <name>ATP</name>
        <dbReference type="ChEBI" id="CHEBI:30616"/>
    </ligand>
</feature>
<feature type="binding site" evidence="5">
    <location>
        <position position="41"/>
    </location>
    <ligand>
        <name>ATP</name>
        <dbReference type="ChEBI" id="CHEBI:30616"/>
    </ligand>
</feature>
<feature type="sequence conflict" description="In Ref. 1; BC045337." evidence="10" ref="1">
    <original>D</original>
    <variation>Y</variation>
    <location>
        <position position="732"/>
    </location>
</feature>
<feature type="sequence conflict" description="In Ref. 1; BC045337." evidence="10" ref="1">
    <original>V</original>
    <variation>A</variation>
    <location>
        <position position="870"/>
    </location>
</feature>
<comment type="function">
    <text evidence="2">Serine/threonine-protein kinase that plays a central role in centriole duplication. Able to trigger procentriole formation on the surface of the parental centriole cylinder, leading to the recruitment of centriole biogenesis proteins such as sass6, cpap, ccp110, cep135 and gamma-tubulin. When overexpressed, it is able to induce centrosome amplification through the simultaneous generation of multiple procentrioles adjoining each parental centriole during S phase. Its central role in centriole replication suggests a possible role in tumorigenesis, centrosome aberrations being frequently observed in tumors. Also involved in deuterosome-mediated centriole amplification in multiciliated that can generate more than 100 centrioles (By similarity).</text>
</comment>
<comment type="catalytic activity">
    <reaction>
        <text>L-seryl-[protein] + ATP = O-phospho-L-seryl-[protein] + ADP + H(+)</text>
        <dbReference type="Rhea" id="RHEA:17989"/>
        <dbReference type="Rhea" id="RHEA-COMP:9863"/>
        <dbReference type="Rhea" id="RHEA-COMP:11604"/>
        <dbReference type="ChEBI" id="CHEBI:15378"/>
        <dbReference type="ChEBI" id="CHEBI:29999"/>
        <dbReference type="ChEBI" id="CHEBI:30616"/>
        <dbReference type="ChEBI" id="CHEBI:83421"/>
        <dbReference type="ChEBI" id="CHEBI:456216"/>
        <dbReference type="EC" id="2.7.11.21"/>
    </reaction>
</comment>
<comment type="catalytic activity">
    <reaction>
        <text>L-threonyl-[protein] + ATP = O-phospho-L-threonyl-[protein] + ADP + H(+)</text>
        <dbReference type="Rhea" id="RHEA:46608"/>
        <dbReference type="Rhea" id="RHEA-COMP:11060"/>
        <dbReference type="Rhea" id="RHEA-COMP:11605"/>
        <dbReference type="ChEBI" id="CHEBI:15378"/>
        <dbReference type="ChEBI" id="CHEBI:30013"/>
        <dbReference type="ChEBI" id="CHEBI:30616"/>
        <dbReference type="ChEBI" id="CHEBI:61977"/>
        <dbReference type="ChEBI" id="CHEBI:456216"/>
        <dbReference type="EC" id="2.7.11.21"/>
    </reaction>
</comment>
<comment type="subunit">
    <text evidence="1 3">Homodimer.</text>
</comment>
<comment type="subcellular location">
    <subcellularLocation>
        <location evidence="2">Cytoplasm</location>
        <location evidence="2">Cytoskeleton</location>
        <location evidence="2">Microtubule organizing center</location>
        <location evidence="2">Centrosome</location>
        <location evidence="2">Centriole</location>
    </subcellularLocation>
    <subcellularLocation>
        <location evidence="2">Cytoplasm</location>
        <location evidence="2">Cytoskeleton</location>
        <location evidence="2">Microtubule organizing center</location>
        <location evidence="2">Centrosome</location>
    </subcellularLocation>
    <text evidence="1">Associates with centrioles throughout the cell cycle. Component of the deuterosome, a structure that promotes de novo centriole amplification in multiciliated cells that can generate more than 100 centrioles (By similarity).</text>
</comment>
<comment type="PTM">
    <text evidence="3">Ubiquitinated; leading to its degradation by the proteasome.</text>
</comment>
<comment type="disruption phenotype">
    <text evidence="9">Morpholino knockdown of the gene results in a smaller body size due to decreased cell proliferation. There is evidence of a delay in mitotic progression with impaired centriole duplication and impaired spindle formation. Mutant has a variable reduction in eye size and impaired responses to visual stimuli associated with a loss of cells containing cilia and an absence of basal bodies in the photoreceptor layer. Knockdown mutant animals also show a ciliary phenotype, with hydrocephalus, renal cysts, ventral curvature, and left-right asymmetry defects.</text>
</comment>
<comment type="similarity">
    <text evidence="5 6 7">Belongs to the protein kinase superfamily. Ser/Thr protein kinase family. CDC5/Polo subfamily.</text>
</comment>
<comment type="sequence caution" evidence="10">
    <conflict type="frameshift">
        <sequence resource="EMBL" id="BC045337"/>
    </conflict>
</comment>
<dbReference type="EC" id="2.7.11.21" evidence="2"/>
<dbReference type="EMBL" id="BC045337">
    <property type="status" value="NOT_ANNOTATED_CDS"/>
    <property type="molecule type" value="mRNA"/>
</dbReference>
<dbReference type="EMBL" id="BC045434">
    <property type="protein sequence ID" value="AAH45434.1"/>
    <property type="molecule type" value="mRNA"/>
</dbReference>
<dbReference type="SMR" id="Q7ZVS3"/>
<dbReference type="ComplexPortal" id="CPX-1300">
    <property type="entry name" value="CEP192-PLK4 complex"/>
</dbReference>
<dbReference type="ComplexPortal" id="CPX-1301">
    <property type="entry name" value="CEP152-PLK4 complex"/>
</dbReference>
<dbReference type="FunCoup" id="Q7ZVS3">
    <property type="interactions" value="1164"/>
</dbReference>
<dbReference type="STRING" id="7955.ENSDARP00000043865"/>
<dbReference type="PaxDb" id="7955-ENSDARP00000043865"/>
<dbReference type="AGR" id="ZFIN:ZDB-GENE-030619-14"/>
<dbReference type="ZFIN" id="ZDB-GENE-030619-14">
    <property type="gene designation" value="plk4"/>
</dbReference>
<dbReference type="eggNOG" id="KOG0575">
    <property type="taxonomic scope" value="Eukaryota"/>
</dbReference>
<dbReference type="InParanoid" id="Q7ZVS3"/>
<dbReference type="PhylomeDB" id="Q7ZVS3"/>
<dbReference type="PRO" id="PR:Q7ZVS3"/>
<dbReference type="Proteomes" id="UP000000437">
    <property type="component" value="Unplaced"/>
</dbReference>
<dbReference type="GO" id="GO:0005814">
    <property type="term" value="C:centriole"/>
    <property type="evidence" value="ECO:0000250"/>
    <property type="project" value="UniProtKB"/>
</dbReference>
<dbReference type="GO" id="GO:0005813">
    <property type="term" value="C:centrosome"/>
    <property type="evidence" value="ECO:0000250"/>
    <property type="project" value="UniProtKB"/>
</dbReference>
<dbReference type="GO" id="GO:0098536">
    <property type="term" value="C:deuterosome"/>
    <property type="evidence" value="ECO:0000250"/>
    <property type="project" value="UniProtKB"/>
</dbReference>
<dbReference type="GO" id="GO:0005730">
    <property type="term" value="C:nucleolus"/>
    <property type="evidence" value="ECO:0000250"/>
    <property type="project" value="UniProtKB"/>
</dbReference>
<dbReference type="GO" id="GO:0005634">
    <property type="term" value="C:nucleus"/>
    <property type="evidence" value="ECO:0000318"/>
    <property type="project" value="GO_Central"/>
</dbReference>
<dbReference type="GO" id="GO:0120098">
    <property type="term" value="C:procentriole"/>
    <property type="evidence" value="ECO:0000303"/>
    <property type="project" value="ComplexPortal"/>
</dbReference>
<dbReference type="GO" id="GO:0120099">
    <property type="term" value="C:procentriole replication complex"/>
    <property type="evidence" value="ECO:0000303"/>
    <property type="project" value="ComplexPortal"/>
</dbReference>
<dbReference type="GO" id="GO:0005524">
    <property type="term" value="F:ATP binding"/>
    <property type="evidence" value="ECO:0007669"/>
    <property type="project" value="UniProtKB-KW"/>
</dbReference>
<dbReference type="GO" id="GO:0106310">
    <property type="term" value="F:protein serine kinase activity"/>
    <property type="evidence" value="ECO:0007669"/>
    <property type="project" value="RHEA"/>
</dbReference>
<dbReference type="GO" id="GO:0004674">
    <property type="term" value="F:protein serine/threonine kinase activity"/>
    <property type="evidence" value="ECO:0000250"/>
    <property type="project" value="UniProtKB"/>
</dbReference>
<dbReference type="GO" id="GO:0098534">
    <property type="term" value="P:centriole assembly"/>
    <property type="evidence" value="ECO:0000315"/>
    <property type="project" value="ZFIN"/>
</dbReference>
<dbReference type="GO" id="GO:0007099">
    <property type="term" value="P:centriole replication"/>
    <property type="evidence" value="ECO:0000250"/>
    <property type="project" value="UniProtKB"/>
</dbReference>
<dbReference type="GO" id="GO:0060271">
    <property type="term" value="P:cilium assembly"/>
    <property type="evidence" value="ECO:0000315"/>
    <property type="project" value="ZFIN"/>
</dbReference>
<dbReference type="GO" id="GO:0098535">
    <property type="term" value="P:de novo centriole assembly involved in multi-ciliated epithelial cell differentiation"/>
    <property type="evidence" value="ECO:0000250"/>
    <property type="project" value="UniProtKB"/>
</dbReference>
<dbReference type="GO" id="GO:0048589">
    <property type="term" value="P:developmental growth"/>
    <property type="evidence" value="ECO:0000315"/>
    <property type="project" value="ZFIN"/>
</dbReference>
<dbReference type="GO" id="GO:0046601">
    <property type="term" value="P:positive regulation of centriole replication"/>
    <property type="evidence" value="ECO:0000250"/>
    <property type="project" value="UniProtKB"/>
</dbReference>
<dbReference type="CDD" id="cd13114">
    <property type="entry name" value="POLO_box_Plk4_1"/>
    <property type="match status" value="1"/>
</dbReference>
<dbReference type="CDD" id="cd13115">
    <property type="entry name" value="POLO_box_Plk4_2"/>
    <property type="match status" value="1"/>
</dbReference>
<dbReference type="CDD" id="cd13116">
    <property type="entry name" value="POLO_box_Plk4_3"/>
    <property type="match status" value="1"/>
</dbReference>
<dbReference type="CDD" id="cd14186">
    <property type="entry name" value="STKc_PLK4"/>
    <property type="match status" value="1"/>
</dbReference>
<dbReference type="FunFam" id="3.30.200.20:FF:000221">
    <property type="entry name" value="Putative serine/threonine-protein kinase PLK4"/>
    <property type="match status" value="1"/>
</dbReference>
<dbReference type="FunFam" id="1.10.510.10:FF:000576">
    <property type="entry name" value="Serine/threonine-protein kinase PLK4"/>
    <property type="match status" value="1"/>
</dbReference>
<dbReference type="FunFam" id="2.40.50.930:FF:000001">
    <property type="entry name" value="Serine/threonine-protein kinase PLK4"/>
    <property type="match status" value="1"/>
</dbReference>
<dbReference type="FunFam" id="3.30.1120.130:FF:000001">
    <property type="entry name" value="serine/threonine-protein kinase PLK4 isoform X1"/>
    <property type="match status" value="1"/>
</dbReference>
<dbReference type="FunFam" id="3.30.1120.120:FF:000001">
    <property type="entry name" value="serine/threonine-protein kinase PLK4 isoform X2"/>
    <property type="match status" value="1"/>
</dbReference>
<dbReference type="Gene3D" id="2.40.50.930">
    <property type="match status" value="1"/>
</dbReference>
<dbReference type="Gene3D" id="3.30.1120.120">
    <property type="match status" value="1"/>
</dbReference>
<dbReference type="Gene3D" id="3.30.1120.130">
    <property type="match status" value="1"/>
</dbReference>
<dbReference type="Gene3D" id="3.30.200.20">
    <property type="entry name" value="Phosphorylase Kinase, domain 1"/>
    <property type="match status" value="1"/>
</dbReference>
<dbReference type="Gene3D" id="1.10.510.10">
    <property type="entry name" value="Transferase(Phosphotransferase) domain 1"/>
    <property type="match status" value="1"/>
</dbReference>
<dbReference type="InterPro" id="IPR011009">
    <property type="entry name" value="Kinase-like_dom_sf"/>
</dbReference>
<dbReference type="InterPro" id="IPR047108">
    <property type="entry name" value="Plk4-like_POLO_box_2_sf"/>
</dbReference>
<dbReference type="InterPro" id="IPR000959">
    <property type="entry name" value="POLO_box_dom"/>
</dbReference>
<dbReference type="InterPro" id="IPR033699">
    <property type="entry name" value="POLO_box_Plk4_1"/>
</dbReference>
<dbReference type="InterPro" id="IPR033698">
    <property type="entry name" value="POLO_box_Plk4_2"/>
</dbReference>
<dbReference type="InterPro" id="IPR033696">
    <property type="entry name" value="POLO_box_Plk4_C"/>
</dbReference>
<dbReference type="InterPro" id="IPR000719">
    <property type="entry name" value="Prot_kinase_dom"/>
</dbReference>
<dbReference type="InterPro" id="IPR017441">
    <property type="entry name" value="Protein_kinase_ATP_BS"/>
</dbReference>
<dbReference type="InterPro" id="IPR046437">
    <property type="entry name" value="Ser_Thr-PK_POLO_box_1_sf"/>
</dbReference>
<dbReference type="InterPro" id="IPR008266">
    <property type="entry name" value="Tyr_kinase_AS"/>
</dbReference>
<dbReference type="PANTHER" id="PTHR24345">
    <property type="entry name" value="SERINE/THREONINE-PROTEIN KINASE PLK"/>
    <property type="match status" value="1"/>
</dbReference>
<dbReference type="PANTHER" id="PTHR24345:SF89">
    <property type="entry name" value="SERINE_THREONINE-PROTEIN KINASE PLK4"/>
    <property type="match status" value="1"/>
</dbReference>
<dbReference type="Pfam" id="PF00069">
    <property type="entry name" value="Pkinase"/>
    <property type="match status" value="1"/>
</dbReference>
<dbReference type="Pfam" id="PF18190">
    <property type="entry name" value="Plk4_PB1"/>
    <property type="match status" value="1"/>
</dbReference>
<dbReference type="Pfam" id="PF18409">
    <property type="entry name" value="Plk4_PB2"/>
    <property type="match status" value="1"/>
</dbReference>
<dbReference type="SUPFAM" id="SSF82615">
    <property type="entry name" value="Polo-box domain"/>
    <property type="match status" value="1"/>
</dbReference>
<dbReference type="SUPFAM" id="SSF56112">
    <property type="entry name" value="Protein kinase-like (PK-like)"/>
    <property type="match status" value="1"/>
</dbReference>
<dbReference type="PROSITE" id="PS51984">
    <property type="entry name" value="CPB1"/>
    <property type="match status" value="1"/>
</dbReference>
<dbReference type="PROSITE" id="PS51985">
    <property type="entry name" value="CPB2"/>
    <property type="match status" value="1"/>
</dbReference>
<dbReference type="PROSITE" id="PS50078">
    <property type="entry name" value="POLO_BOX"/>
    <property type="match status" value="1"/>
</dbReference>
<dbReference type="PROSITE" id="PS00107">
    <property type="entry name" value="PROTEIN_KINASE_ATP"/>
    <property type="match status" value="1"/>
</dbReference>
<dbReference type="PROSITE" id="PS50011">
    <property type="entry name" value="PROTEIN_KINASE_DOM"/>
    <property type="match status" value="1"/>
</dbReference>